<sequence length="526" mass="58966">MRNALFLIFISLCSVCKSSAQGYSNPVIPGFHPDPSVCKAGDDYYLVNSSFQYFPGVPLFHSKDLVHWEQIGNCLTRPSQLDLTNANSGSGIFAPTIRYNDGVFYMITTNVSGKGNFLVHTTDPRSEWSEPVWLEQGGIDPSLYFEDGKCFMVSNPDGYINLCEIDPMTGKQLSSSKRIWNGTGGRYAEGPHIYKKDGWYYLLISEGGTELGHKVTIARSRYIDGPYQGNPANPILTHANESGQSSPIQGTGHADLVEGTDGSWWMVCLAYRIMPGTHHTLGRETYLAPVRWDKDAWPVVNSNGTISLKMDVPTLPQQEMKGRPERIDFKEGKLSPEWIHLQNPEAKNYIFTKDGKLRLIATPVTLSDWKSPTFVALRQEHFDMEASAPVVLQKAGVNDEAGISVFMEFHSHYDLFVRQDKDRKRSVGLRYKLGEITHYAKEVSLPTDGEVELVVKSDINYYYFGYKVNGIYHDLGKMNTRYLSTETAGGFTGVVLGLYITSASKDSKAYADFEYFKYKGKPGENK</sequence>
<organism>
    <name type="scientific">Bacteroides ovatus (strain ATCC 8483 / DSM 1896 / JCM 5824 / BCRC 10623 / CCUG 4943 / NCTC 11153)</name>
    <dbReference type="NCBI Taxonomy" id="411476"/>
    <lineage>
        <taxon>Bacteria</taxon>
        <taxon>Pseudomonadati</taxon>
        <taxon>Bacteroidota</taxon>
        <taxon>Bacteroidia</taxon>
        <taxon>Bacteroidales</taxon>
        <taxon>Bacteroidaceae</taxon>
        <taxon>Bacteroides</taxon>
    </lineage>
</organism>
<gene>
    <name type="ORF">BACOVA_02654</name>
</gene>
<keyword id="KW-0002">3D-structure</keyword>
<keyword id="KW-0119">Carbohydrate metabolism</keyword>
<keyword id="KW-0326">Glycosidase</keyword>
<keyword id="KW-0378">Hydrolase</keyword>
<keyword id="KW-0574">Periplasm</keyword>
<keyword id="KW-0624">Polysaccharide degradation</keyword>
<keyword id="KW-0732">Signal</keyword>
<proteinExistence type="evidence at protein level"/>
<name>GH43A_BACO1</name>
<reference key="1">
    <citation type="submission" date="2007-04" db="EMBL/GenBank/DDBJ databases">
        <title>Draft genome sequence of Bacteroides ovatus (ATCC 8483).</title>
        <authorList>
            <person name="Sudarsanam P."/>
            <person name="Ley R."/>
            <person name="Guruge J."/>
            <person name="Turnbaugh P.J."/>
            <person name="Mahowald M."/>
            <person name="Liep D."/>
            <person name="Gordon J."/>
        </authorList>
    </citation>
    <scope>NUCLEOTIDE SEQUENCE [LARGE SCALE GENOMIC DNA]</scope>
    <source>
        <strain>ATCC 8483 / DSM 1896 / JCM 5824 / BCRC 10623 / CCUG 4943 / NCTC 11153</strain>
    </source>
</reference>
<reference key="2">
    <citation type="journal article" date="2014" name="Nature">
        <title>A discrete genetic locus confers xyloglucan metabolism in select human gut Bacteroidetes.</title>
        <authorList>
            <person name="Larsbrink J."/>
            <person name="Rogers T.E."/>
            <person name="Hemsworth G.R."/>
            <person name="McKee L.S."/>
            <person name="Tauzin A.S."/>
            <person name="Spadiut O."/>
            <person name="Klinter S."/>
            <person name="Pudlo N.A."/>
            <person name="Urs K."/>
            <person name="Koropatkin N.M."/>
            <person name="Creagh A.L."/>
            <person name="Haynes C.A."/>
            <person name="Kelly A.G."/>
            <person name="Cederholm S.N."/>
            <person name="Davies G.J."/>
            <person name="Martens E.C."/>
            <person name="Brumer H."/>
        </authorList>
    </citation>
    <scope>FUNCTION</scope>
    <scope>CATALYTIC ACTIVITY</scope>
    <scope>BIOPHYSICOCHEMICAL PROPERTIES</scope>
    <scope>PATHWAY</scope>
</reference>
<reference key="3">
    <citation type="journal article" date="2016" name="Open Biol.">
        <title>Structural dissection of a complex Bacteroides ovatus gene locus conferring xyloglucan metabolism in the human gut.</title>
        <authorList>
            <person name="Hemsworth G.R."/>
            <person name="Thompson A.J."/>
            <person name="Stepper J."/>
            <person name="Sobala L.F."/>
            <person name="Coyle T."/>
            <person name="Larsbrink J."/>
            <person name="Spadiut O."/>
            <person name="Goddard-Borger E.D."/>
            <person name="Stubbs K.A."/>
            <person name="Brumer H."/>
            <person name="Davies G.J."/>
        </authorList>
    </citation>
    <scope>X-RAY CRYSTALLOGRAPHY (1.60 ANGSTROMS)</scope>
</reference>
<feature type="signal peptide" evidence="1">
    <location>
        <begin position="1"/>
        <end position="20"/>
    </location>
</feature>
<feature type="chain" id="PRO_0000425897" description="Non-reducing end alpha-L-arabinofuranosidase BoGH43A">
    <location>
        <begin position="21"/>
        <end position="526"/>
    </location>
</feature>
<feature type="active site" description="Proton acceptor" evidence="5">
    <location>
        <position position="34"/>
    </location>
</feature>
<feature type="active site" description="Proton donor" evidence="5">
    <location>
        <position position="189"/>
    </location>
</feature>
<feature type="site" description="Important for catalytic activity, responsible for pKa modulation of the active site Glu and correct orientation of both the proton donor and substrate" evidence="5">
    <location>
        <position position="140"/>
    </location>
</feature>
<feature type="strand" evidence="6">
    <location>
        <begin position="21"/>
        <end position="25"/>
    </location>
</feature>
<feature type="strand" evidence="6">
    <location>
        <begin position="36"/>
        <end position="40"/>
    </location>
</feature>
<feature type="strand" evidence="6">
    <location>
        <begin position="43"/>
        <end position="47"/>
    </location>
</feature>
<feature type="strand" evidence="6">
    <location>
        <begin position="53"/>
        <end position="67"/>
    </location>
</feature>
<feature type="strand" evidence="6">
    <location>
        <begin position="69"/>
        <end position="75"/>
    </location>
</feature>
<feature type="helix" evidence="6">
    <location>
        <begin position="78"/>
        <end position="80"/>
    </location>
</feature>
<feature type="strand" evidence="6">
    <location>
        <begin position="90"/>
        <end position="92"/>
    </location>
</feature>
<feature type="strand" evidence="6">
    <location>
        <begin position="96"/>
        <end position="100"/>
    </location>
</feature>
<feature type="strand" evidence="6">
    <location>
        <begin position="103"/>
        <end position="110"/>
    </location>
</feature>
<feature type="turn" evidence="6">
    <location>
        <begin position="111"/>
        <end position="114"/>
    </location>
</feature>
<feature type="strand" evidence="6">
    <location>
        <begin position="115"/>
        <end position="122"/>
    </location>
</feature>
<feature type="strand" evidence="6">
    <location>
        <begin position="142"/>
        <end position="146"/>
    </location>
</feature>
<feature type="strand" evidence="6">
    <location>
        <begin position="149"/>
        <end position="154"/>
    </location>
</feature>
<feature type="helix" evidence="6">
    <location>
        <begin position="156"/>
        <end position="158"/>
    </location>
</feature>
<feature type="strand" evidence="6">
    <location>
        <begin position="159"/>
        <end position="165"/>
    </location>
</feature>
<feature type="turn" evidence="6">
    <location>
        <begin position="167"/>
        <end position="169"/>
    </location>
</feature>
<feature type="strand" evidence="6">
    <location>
        <begin position="177"/>
        <end position="180"/>
    </location>
</feature>
<feature type="strand" evidence="6">
    <location>
        <begin position="183"/>
        <end position="187"/>
    </location>
</feature>
<feature type="strand" evidence="6">
    <location>
        <begin position="189"/>
        <end position="196"/>
    </location>
</feature>
<feature type="strand" evidence="6">
    <location>
        <begin position="199"/>
        <end position="207"/>
    </location>
</feature>
<feature type="strand" evidence="6">
    <location>
        <begin position="214"/>
        <end position="222"/>
    </location>
</feature>
<feature type="strand" evidence="6">
    <location>
        <begin position="235"/>
        <end position="240"/>
    </location>
</feature>
<feature type="helix" evidence="6">
    <location>
        <begin position="241"/>
        <end position="243"/>
    </location>
</feature>
<feature type="strand" evidence="6">
    <location>
        <begin position="247"/>
        <end position="258"/>
    </location>
</feature>
<feature type="strand" evidence="6">
    <location>
        <begin position="264"/>
        <end position="272"/>
    </location>
</feature>
<feature type="turn" evidence="6">
    <location>
        <begin position="275"/>
        <end position="277"/>
    </location>
</feature>
<feature type="strand" evidence="6">
    <location>
        <begin position="283"/>
        <end position="291"/>
    </location>
</feature>
<feature type="turn" evidence="6">
    <location>
        <begin position="301"/>
        <end position="303"/>
    </location>
</feature>
<feature type="strand" evidence="6">
    <location>
        <begin position="308"/>
        <end position="313"/>
    </location>
</feature>
<feature type="strand" evidence="6">
    <location>
        <begin position="325"/>
        <end position="328"/>
    </location>
</feature>
<feature type="strand" evidence="6">
    <location>
        <begin position="339"/>
        <end position="343"/>
    </location>
</feature>
<feature type="helix" evidence="6">
    <location>
        <begin position="346"/>
        <end position="348"/>
    </location>
</feature>
<feature type="strand" evidence="6">
    <location>
        <begin position="349"/>
        <end position="351"/>
    </location>
</feature>
<feature type="strand" evidence="6">
    <location>
        <begin position="357"/>
        <end position="360"/>
    </location>
</feature>
<feature type="strand" evidence="6">
    <location>
        <begin position="368"/>
        <end position="370"/>
    </location>
</feature>
<feature type="strand" evidence="6">
    <location>
        <begin position="373"/>
        <end position="378"/>
    </location>
</feature>
<feature type="strand" evidence="6">
    <location>
        <begin position="382"/>
        <end position="394"/>
    </location>
</feature>
<feature type="strand" evidence="6">
    <location>
        <begin position="400"/>
        <end position="408"/>
    </location>
</feature>
<feature type="strand" evidence="6">
    <location>
        <begin position="411"/>
        <end position="419"/>
    </location>
</feature>
<feature type="helix" evidence="6">
    <location>
        <begin position="421"/>
        <end position="423"/>
    </location>
</feature>
<feature type="strand" evidence="6">
    <location>
        <begin position="425"/>
        <end position="433"/>
    </location>
</feature>
<feature type="strand" evidence="6">
    <location>
        <begin position="436"/>
        <end position="444"/>
    </location>
</feature>
<feature type="strand" evidence="7">
    <location>
        <begin position="447"/>
        <end position="449"/>
    </location>
</feature>
<feature type="strand" evidence="6">
    <location>
        <begin position="451"/>
        <end position="457"/>
    </location>
</feature>
<feature type="strand" evidence="6">
    <location>
        <begin position="459"/>
        <end position="468"/>
    </location>
</feature>
<feature type="strand" evidence="6">
    <location>
        <begin position="471"/>
        <end position="479"/>
    </location>
</feature>
<feature type="helix" evidence="6">
    <location>
        <begin position="480"/>
        <end position="483"/>
    </location>
</feature>
<feature type="helix" evidence="6">
    <location>
        <begin position="485"/>
        <end position="488"/>
    </location>
</feature>
<feature type="strand" evidence="6">
    <location>
        <begin position="495"/>
        <end position="501"/>
    </location>
</feature>
<feature type="strand" evidence="6">
    <location>
        <begin position="503"/>
        <end position="506"/>
    </location>
</feature>
<feature type="strand" evidence="6">
    <location>
        <begin position="510"/>
        <end position="513"/>
    </location>
</feature>
<feature type="strand" evidence="6">
    <location>
        <begin position="515"/>
        <end position="520"/>
    </location>
</feature>
<dbReference type="EC" id="3.2.1.55"/>
<dbReference type="EMBL" id="AAXF02000049">
    <property type="protein sequence ID" value="EDO11445.1"/>
    <property type="molecule type" value="Genomic_DNA"/>
</dbReference>
<dbReference type="RefSeq" id="WP_004298447.1">
    <property type="nucleotide sequence ID" value="NZ_DS264579.1"/>
</dbReference>
<dbReference type="PDB" id="5JOW">
    <property type="method" value="X-ray"/>
    <property type="resolution" value="1.60 A"/>
    <property type="chains" value="A/B=21-526"/>
</dbReference>
<dbReference type="PDB" id="5JOX">
    <property type="method" value="X-ray"/>
    <property type="resolution" value="1.80 A"/>
    <property type="chains" value="A/B=21-526"/>
</dbReference>
<dbReference type="PDB" id="5JOY">
    <property type="method" value="X-ray"/>
    <property type="resolution" value="1.90 A"/>
    <property type="chains" value="A/B=21-526"/>
</dbReference>
<dbReference type="PDBsum" id="5JOW"/>
<dbReference type="PDBsum" id="5JOX"/>
<dbReference type="PDBsum" id="5JOY"/>
<dbReference type="SMR" id="A7LXT8"/>
<dbReference type="CAZy" id="GH43">
    <property type="family name" value="Glycoside Hydrolase Family 43"/>
</dbReference>
<dbReference type="eggNOG" id="COG3507">
    <property type="taxonomic scope" value="Bacteria"/>
</dbReference>
<dbReference type="HOGENOM" id="CLU_016508_2_0_10"/>
<dbReference type="SABIO-RK" id="A7LXT8"/>
<dbReference type="UniPathway" id="UPA01045"/>
<dbReference type="Proteomes" id="UP000005475">
    <property type="component" value="Unassembled WGS sequence"/>
</dbReference>
<dbReference type="GO" id="GO:0042597">
    <property type="term" value="C:periplasmic space"/>
    <property type="evidence" value="ECO:0007669"/>
    <property type="project" value="UniProtKB-SubCell"/>
</dbReference>
<dbReference type="GO" id="GO:0046556">
    <property type="term" value="F:alpha-L-arabinofuranosidase activity"/>
    <property type="evidence" value="ECO:0000314"/>
    <property type="project" value="UniProtKB"/>
</dbReference>
<dbReference type="GO" id="GO:0085030">
    <property type="term" value="P:symbiotic process benefiting host"/>
    <property type="evidence" value="ECO:0000314"/>
    <property type="project" value="UniProtKB"/>
</dbReference>
<dbReference type="GO" id="GO:2000899">
    <property type="term" value="P:xyloglucan catabolic process"/>
    <property type="evidence" value="ECO:0000314"/>
    <property type="project" value="UniProtKB"/>
</dbReference>
<dbReference type="CDD" id="cd18617">
    <property type="entry name" value="GH43_XynB-like"/>
    <property type="match status" value="1"/>
</dbReference>
<dbReference type="FunFam" id="2.115.10.20:FF:000013">
    <property type="entry name" value="Non-reducing end alpha-L-arabinofuranosidase BoGH43A"/>
    <property type="match status" value="1"/>
</dbReference>
<dbReference type="FunFam" id="2.60.120.200:FF:000362">
    <property type="entry name" value="Non-reducing end alpha-L-arabinofuranosidase BoGH43A"/>
    <property type="match status" value="1"/>
</dbReference>
<dbReference type="Gene3D" id="2.60.120.200">
    <property type="match status" value="1"/>
</dbReference>
<dbReference type="Gene3D" id="2.115.10.20">
    <property type="entry name" value="Glycosyl hydrolase domain, family 43"/>
    <property type="match status" value="1"/>
</dbReference>
<dbReference type="InterPro" id="IPR013320">
    <property type="entry name" value="ConA-like_dom_sf"/>
</dbReference>
<dbReference type="InterPro" id="IPR041542">
    <property type="entry name" value="GH43_C2"/>
</dbReference>
<dbReference type="InterPro" id="IPR006710">
    <property type="entry name" value="Glyco_hydro_43"/>
</dbReference>
<dbReference type="InterPro" id="IPR023296">
    <property type="entry name" value="Glyco_hydro_beta-prop_sf"/>
</dbReference>
<dbReference type="InterPro" id="IPR051795">
    <property type="entry name" value="Glycosyl_Hydrlase_43"/>
</dbReference>
<dbReference type="PANTHER" id="PTHR42812">
    <property type="entry name" value="BETA-XYLOSIDASE"/>
    <property type="match status" value="1"/>
</dbReference>
<dbReference type="PANTHER" id="PTHR42812:SF12">
    <property type="entry name" value="BETA-XYLOSIDASE-RELATED"/>
    <property type="match status" value="1"/>
</dbReference>
<dbReference type="Pfam" id="PF17851">
    <property type="entry name" value="GH43_C2"/>
    <property type="match status" value="1"/>
</dbReference>
<dbReference type="Pfam" id="PF04616">
    <property type="entry name" value="Glyco_hydro_43"/>
    <property type="match status" value="1"/>
</dbReference>
<dbReference type="SUPFAM" id="SSF75005">
    <property type="entry name" value="Arabinanase/levansucrase/invertase"/>
    <property type="match status" value="1"/>
</dbReference>
<dbReference type="SUPFAM" id="SSF49899">
    <property type="entry name" value="Concanavalin A-like lectins/glucanases"/>
    <property type="match status" value="1"/>
</dbReference>
<evidence type="ECO:0000255" key="1"/>
<evidence type="ECO:0000269" key="2">
    <source>
    </source>
</evidence>
<evidence type="ECO:0000305" key="3"/>
<evidence type="ECO:0000305" key="4">
    <source>
    </source>
</evidence>
<evidence type="ECO:0000305" key="5">
    <source>
    </source>
</evidence>
<evidence type="ECO:0007829" key="6">
    <source>
        <dbReference type="PDB" id="5JOW"/>
    </source>
</evidence>
<evidence type="ECO:0007829" key="7">
    <source>
        <dbReference type="PDB" id="5JOX"/>
    </source>
</evidence>
<protein>
    <recommendedName>
        <fullName>Non-reducing end alpha-L-arabinofuranosidase BoGH43A</fullName>
        <ecNumber>3.2.1.55</ecNumber>
    </recommendedName>
    <alternativeName>
        <fullName>Glycosyl hydrolase family protein 43A</fullName>
        <shortName>BoGH43A</shortName>
    </alternativeName>
</protein>
<accession>A7LXT8</accession>
<comment type="function">
    <text evidence="2">Alpha-L-arabinofuranosidase involved in xyloglucan degradation by mediating the cleavage of terminal non-reducing alpha-L-arabinofuranoside residues in xyloglucan branches, converting the 'S' units to 'X' units.</text>
</comment>
<comment type="catalytic activity">
    <reaction evidence="2">
        <text>Hydrolysis of terminal non-reducing alpha-L-arabinofuranoside residues in alpha-L-arabinosides.</text>
        <dbReference type="EC" id="3.2.1.55"/>
    </reaction>
</comment>
<comment type="biophysicochemical properties">
    <kinetics>
        <KM evidence="2">0.71 mM for L-Araf-alpha-PNP</KM>
        <KM evidence="2">6.58 mM for Xyl-beta-PNP</KM>
        <text>kcat is 0.057 sec(-1) for L-Araf-alpha-PNP. kcat is 0.26 sec(-1) for Xyl-beta-PNP.</text>
    </kinetics>
    <phDependence>
        <text evidence="2">Optimum pH is 6.0-7.0.</text>
    </phDependence>
</comment>
<comment type="pathway">
    <text evidence="2">Glucan metabolism; xyloglucan degradation.</text>
</comment>
<comment type="subcellular location">
    <subcellularLocation>
        <location evidence="3">Periplasm</location>
    </subcellularLocation>
    <text evidence="2">Periplasmic localization is predicted by analogy with the archetypal sus locus.</text>
</comment>
<comment type="miscellaneous">
    <text evidence="4">Gut bacteria supply the human body with energy from dietary polysaccharides through glycosidases that are absent in the human genome. Xyloglucans are a ubiquitous family of highly branched plant cell wall polysaccharides present in the vegetables we consume. Enzymes involved in xyloglucan degradation mediate the conversion of otherwise indigestible plant polysaccharides to short-chain fatty acids (PubMed:24463512).</text>
</comment>
<comment type="similarity">
    <text evidence="3">Belongs to the glycosyl hydrolase 43 family.</text>
</comment>